<comment type="catalytic activity">
    <reaction evidence="1">
        <text>1-(5-phospho-beta-D-ribosyl)-5-[(5-phospho-beta-D-ribosylamino)methylideneamino]imidazole-4-carboxamide = 5-[(5-phospho-1-deoxy-D-ribulos-1-ylimino)methylamino]-1-(5-phospho-beta-D-ribosyl)imidazole-4-carboxamide</text>
        <dbReference type="Rhea" id="RHEA:15469"/>
        <dbReference type="ChEBI" id="CHEBI:58435"/>
        <dbReference type="ChEBI" id="CHEBI:58525"/>
        <dbReference type="EC" id="5.3.1.16"/>
    </reaction>
</comment>
<comment type="pathway">
    <text evidence="1">Amino-acid biosynthesis; L-histidine biosynthesis; L-histidine from 5-phospho-alpha-D-ribose 1-diphosphate: step 4/9.</text>
</comment>
<comment type="subcellular location">
    <subcellularLocation>
        <location evidence="1">Cytoplasm</location>
    </subcellularLocation>
</comment>
<comment type="similarity">
    <text evidence="1">Belongs to the HisA/HisF family.</text>
</comment>
<accession>Q1GEZ5</accession>
<proteinExistence type="inferred from homology"/>
<sequence length="240" mass="24928">MILYPAIDLKDGQAVRLLHGDMDKTTVFNDNPAAQALEFVAAGCEWLHLVDLNGAFAGEPVNAAPVEEILRQCKVPAQLGGGIRDMATIERWLDKGLARVILGTVAVENPDLVREAARAFPGKVAVGIDARNGKVATKGWAEETDVEVTDLAKSFEDAGVAAIIYTDIMRDGAMKGPNIDATAALANAVSIPVIASGGVSSLEDLHALKSCGAALNGAISGRALYDGAIDLAEALAVLKG</sequence>
<keyword id="KW-0028">Amino-acid biosynthesis</keyword>
<keyword id="KW-0963">Cytoplasm</keyword>
<keyword id="KW-0368">Histidine biosynthesis</keyword>
<keyword id="KW-0413">Isomerase</keyword>
<keyword id="KW-1185">Reference proteome</keyword>
<reference key="1">
    <citation type="submission" date="2006-05" db="EMBL/GenBank/DDBJ databases">
        <title>Complete sequence of chromosome of Silicibacter sp. TM1040.</title>
        <authorList>
            <consortium name="US DOE Joint Genome Institute"/>
            <person name="Copeland A."/>
            <person name="Lucas S."/>
            <person name="Lapidus A."/>
            <person name="Barry K."/>
            <person name="Detter J.C."/>
            <person name="Glavina del Rio T."/>
            <person name="Hammon N."/>
            <person name="Israni S."/>
            <person name="Dalin E."/>
            <person name="Tice H."/>
            <person name="Pitluck S."/>
            <person name="Brettin T."/>
            <person name="Bruce D."/>
            <person name="Han C."/>
            <person name="Tapia R."/>
            <person name="Goodwin L."/>
            <person name="Thompson L.S."/>
            <person name="Gilna P."/>
            <person name="Schmutz J."/>
            <person name="Larimer F."/>
            <person name="Land M."/>
            <person name="Hauser L."/>
            <person name="Kyrpides N."/>
            <person name="Kim E."/>
            <person name="Belas R."/>
            <person name="Moran M.A."/>
            <person name="Buchan A."/>
            <person name="Gonzalez J.M."/>
            <person name="Schell M.A."/>
            <person name="Sun F."/>
            <person name="Richardson P."/>
        </authorList>
    </citation>
    <scope>NUCLEOTIDE SEQUENCE [LARGE SCALE GENOMIC DNA]</scope>
    <source>
        <strain>TM1040</strain>
    </source>
</reference>
<protein>
    <recommendedName>
        <fullName evidence="1">1-(5-phosphoribosyl)-5-[(5-phosphoribosylamino)methylideneamino] imidazole-4-carboxamide isomerase 2</fullName>
        <ecNumber evidence="1">5.3.1.16</ecNumber>
    </recommendedName>
    <alternativeName>
        <fullName evidence="1">Phosphoribosylformimino-5-aminoimidazole carboxamide ribotide isomerase 2</fullName>
    </alternativeName>
</protein>
<evidence type="ECO:0000255" key="1">
    <source>
        <dbReference type="HAMAP-Rule" id="MF_01014"/>
    </source>
</evidence>
<dbReference type="EC" id="5.3.1.16" evidence="1"/>
<dbReference type="EMBL" id="CP000377">
    <property type="protein sequence ID" value="ABF64771.1"/>
    <property type="molecule type" value="Genomic_DNA"/>
</dbReference>
<dbReference type="RefSeq" id="WP_011539363.1">
    <property type="nucleotide sequence ID" value="NC_008044.1"/>
</dbReference>
<dbReference type="SMR" id="Q1GEZ5"/>
<dbReference type="STRING" id="292414.TM1040_2039"/>
<dbReference type="KEGG" id="sit:TM1040_2039"/>
<dbReference type="eggNOG" id="COG0106">
    <property type="taxonomic scope" value="Bacteria"/>
</dbReference>
<dbReference type="HOGENOM" id="CLU_048577_1_1_5"/>
<dbReference type="OrthoDB" id="9807749at2"/>
<dbReference type="UniPathway" id="UPA00031">
    <property type="reaction ID" value="UER00009"/>
</dbReference>
<dbReference type="Proteomes" id="UP000000636">
    <property type="component" value="Chromosome"/>
</dbReference>
<dbReference type="GO" id="GO:0005737">
    <property type="term" value="C:cytoplasm"/>
    <property type="evidence" value="ECO:0007669"/>
    <property type="project" value="UniProtKB-SubCell"/>
</dbReference>
<dbReference type="GO" id="GO:0003949">
    <property type="term" value="F:1-(5-phosphoribosyl)-5-[(5-phosphoribosylamino)methylideneamino]imidazole-4-carboxamide isomerase activity"/>
    <property type="evidence" value="ECO:0007669"/>
    <property type="project" value="UniProtKB-UniRule"/>
</dbReference>
<dbReference type="GO" id="GO:0000105">
    <property type="term" value="P:L-histidine biosynthetic process"/>
    <property type="evidence" value="ECO:0007669"/>
    <property type="project" value="UniProtKB-UniRule"/>
</dbReference>
<dbReference type="GO" id="GO:0000162">
    <property type="term" value="P:L-tryptophan biosynthetic process"/>
    <property type="evidence" value="ECO:0007669"/>
    <property type="project" value="TreeGrafter"/>
</dbReference>
<dbReference type="CDD" id="cd04732">
    <property type="entry name" value="HisA"/>
    <property type="match status" value="1"/>
</dbReference>
<dbReference type="FunFam" id="3.20.20.70:FF:000009">
    <property type="entry name" value="1-(5-phosphoribosyl)-5-[(5-phosphoribosylamino)methylideneamino] imidazole-4-carboxamide isomerase"/>
    <property type="match status" value="1"/>
</dbReference>
<dbReference type="Gene3D" id="3.20.20.70">
    <property type="entry name" value="Aldolase class I"/>
    <property type="match status" value="1"/>
</dbReference>
<dbReference type="HAMAP" id="MF_01014">
    <property type="entry name" value="HisA"/>
    <property type="match status" value="1"/>
</dbReference>
<dbReference type="InterPro" id="IPR013785">
    <property type="entry name" value="Aldolase_TIM"/>
</dbReference>
<dbReference type="InterPro" id="IPR006062">
    <property type="entry name" value="His_biosynth"/>
</dbReference>
<dbReference type="InterPro" id="IPR006063">
    <property type="entry name" value="HisA_bact_arch"/>
</dbReference>
<dbReference type="InterPro" id="IPR044524">
    <property type="entry name" value="Isoase_HisA-like"/>
</dbReference>
<dbReference type="InterPro" id="IPR023016">
    <property type="entry name" value="Isoase_HisA-like_bact"/>
</dbReference>
<dbReference type="InterPro" id="IPR011060">
    <property type="entry name" value="RibuloseP-bd_barrel"/>
</dbReference>
<dbReference type="NCBIfam" id="TIGR00007">
    <property type="entry name" value="1-(5-phosphoribosyl)-5-[(5-phosphoribosylamino)methylideneamino]imidazole-4-carboxamide isomerase"/>
    <property type="match status" value="1"/>
</dbReference>
<dbReference type="NCBIfam" id="NF010112">
    <property type="entry name" value="PRK13585.1"/>
    <property type="match status" value="1"/>
</dbReference>
<dbReference type="PANTHER" id="PTHR43090">
    <property type="entry name" value="1-(5-PHOSPHORIBOSYL)-5-[(5-PHOSPHORIBOSYLAMINO)METHYLIDENEAMINO] IMIDAZOLE-4-CARBOXAMIDE ISOMERASE"/>
    <property type="match status" value="1"/>
</dbReference>
<dbReference type="PANTHER" id="PTHR43090:SF2">
    <property type="entry name" value="1-(5-PHOSPHORIBOSYL)-5-[(5-PHOSPHORIBOSYLAMINO)METHYLIDENEAMINO] IMIDAZOLE-4-CARBOXAMIDE ISOMERASE"/>
    <property type="match status" value="1"/>
</dbReference>
<dbReference type="Pfam" id="PF00977">
    <property type="entry name" value="His_biosynth"/>
    <property type="match status" value="1"/>
</dbReference>
<dbReference type="SUPFAM" id="SSF51366">
    <property type="entry name" value="Ribulose-phoshate binding barrel"/>
    <property type="match status" value="1"/>
</dbReference>
<feature type="chain" id="PRO_0000290544" description="1-(5-phosphoribosyl)-5-[(5-phosphoribosylamino)methylideneamino] imidazole-4-carboxamide isomerase 2">
    <location>
        <begin position="1"/>
        <end position="240"/>
    </location>
</feature>
<feature type="active site" description="Proton acceptor" evidence="1">
    <location>
        <position position="8"/>
    </location>
</feature>
<feature type="active site" description="Proton donor" evidence="1">
    <location>
        <position position="129"/>
    </location>
</feature>
<organism>
    <name type="scientific">Ruegeria sp. (strain TM1040)</name>
    <name type="common">Silicibacter sp.</name>
    <dbReference type="NCBI Taxonomy" id="292414"/>
    <lineage>
        <taxon>Bacteria</taxon>
        <taxon>Pseudomonadati</taxon>
        <taxon>Pseudomonadota</taxon>
        <taxon>Alphaproteobacteria</taxon>
        <taxon>Rhodobacterales</taxon>
        <taxon>Roseobacteraceae</taxon>
        <taxon>Ruegeria</taxon>
    </lineage>
</organism>
<name>HIS42_RUEST</name>
<gene>
    <name evidence="1" type="primary">hisA2</name>
    <name type="ordered locus">TM1040_2039</name>
</gene>